<organismHost>
    <name type="scientific">Connochaetes taurinus</name>
    <name type="common">Blue wildebeest</name>
    <dbReference type="NCBI Taxonomy" id="9927"/>
</organismHost>
<keyword id="KW-1015">Disulfide bond</keyword>
<keyword id="KW-0325">Glycoprotein</keyword>
<keyword id="KW-1039">Host endosome</keyword>
<keyword id="KW-1040">Host Golgi apparatus</keyword>
<keyword id="KW-1043">Host membrane</keyword>
<keyword id="KW-1048">Host nucleus</keyword>
<keyword id="KW-0472">Membrane</keyword>
<keyword id="KW-1185">Reference proteome</keyword>
<keyword id="KW-0812">Transmembrane</keyword>
<keyword id="KW-1133">Transmembrane helix</keyword>
<keyword id="KW-0261">Viral envelope protein</keyword>
<keyword id="KW-0946">Virion</keyword>
<gene>
    <name evidence="1" type="primary">gM</name>
    <name type="ORF">39</name>
</gene>
<accession>O36388</accession>
<organism>
    <name type="scientific">Alcelaphine herpesvirus 1 (strain C500)</name>
    <name type="common">AlHV-1</name>
    <name type="synonym">Malignant catarrhal fever virus</name>
    <dbReference type="NCBI Taxonomy" id="654901"/>
    <lineage>
        <taxon>Viruses</taxon>
        <taxon>Duplodnaviria</taxon>
        <taxon>Heunggongvirae</taxon>
        <taxon>Peploviricota</taxon>
        <taxon>Herviviricetes</taxon>
        <taxon>Herpesvirales</taxon>
        <taxon>Orthoherpesviridae</taxon>
        <taxon>Gammaherpesvirinae</taxon>
        <taxon>Macavirus</taxon>
        <taxon>Macavirus alcelaphinegamma1</taxon>
    </lineage>
</organism>
<comment type="function">
    <text evidence="1">Envelope glycoprotein important for virion assembly and egress. Plays a role in the correct incorporation of gH-gL into virion membrane. Directs the glycoprotein N (gN) to the host trans-Golgi network.</text>
</comment>
<comment type="subunit">
    <text evidence="1">Interacts (via N-terminus) with gN (via N-terminus). The gM-gN heterodimer forms the gCII complex.</text>
</comment>
<comment type="subcellular location">
    <subcellularLocation>
        <location evidence="1">Virion membrane</location>
        <topology evidence="1">Multi-pass membrane protein</topology>
    </subcellularLocation>
    <subcellularLocation>
        <location evidence="1">Host Golgi apparatus</location>
        <location evidence="1">Host trans-Golgi network</location>
    </subcellularLocation>
    <subcellularLocation>
        <location evidence="1">Host endosome membrane</location>
        <topology evidence="1">Multi-pass membrane protein</topology>
    </subcellularLocation>
    <subcellularLocation>
        <location evidence="1">Host nucleus inner membrane</location>
        <topology evidence="1">Multi-pass membrane protein</topology>
    </subcellularLocation>
    <text evidence="1">During virion morphogenesis, this protein accumulates in the trans-Golgi network where secondary envelopment occurs.</text>
</comment>
<comment type="domain">
    <text>The highly charged and proline-rich cytoplasmic tail might interact with the virion tegument.</text>
</comment>
<comment type="similarity">
    <text evidence="1">Belongs to the herpesviridae glycoprotein M family.</text>
</comment>
<evidence type="ECO:0000255" key="1">
    <source>
        <dbReference type="HAMAP-Rule" id="MF_04035"/>
    </source>
</evidence>
<evidence type="ECO:0000256" key="2">
    <source>
        <dbReference type="SAM" id="MobiDB-lite"/>
    </source>
</evidence>
<name>GM_ALHV1</name>
<protein>
    <recommendedName>
        <fullName evidence="1">Envelope glycoprotein M</fullName>
        <shortName evidence="1">gM</shortName>
    </recommendedName>
</protein>
<reference key="1">
    <citation type="journal article" date="1997" name="J. Virol.">
        <title>Primary structure of the alcelaphine herpesvirus 1 genome.</title>
        <authorList>
            <person name="Ensser A."/>
            <person name="Pflanz R."/>
            <person name="Fleckenstein B."/>
        </authorList>
    </citation>
    <scope>NUCLEOTIDE SEQUENCE [LARGE SCALE GENOMIC DNA]</scope>
</reference>
<proteinExistence type="inferred from homology"/>
<feature type="chain" id="PRO_0000405749" description="Envelope glycoprotein M">
    <location>
        <begin position="1"/>
        <end position="374"/>
    </location>
</feature>
<feature type="topological domain" description="Intravirion" evidence="1">
    <location>
        <begin position="1"/>
        <end position="16"/>
    </location>
</feature>
<feature type="transmembrane region" description="Helical" evidence="1">
    <location>
        <begin position="17"/>
        <end position="37"/>
    </location>
</feature>
<feature type="topological domain" description="Virion surface" evidence="1">
    <location>
        <begin position="38"/>
        <end position="82"/>
    </location>
</feature>
<feature type="transmembrane region" description="Helical" evidence="1">
    <location>
        <begin position="83"/>
        <end position="103"/>
    </location>
</feature>
<feature type="topological domain" description="Intravirion" evidence="1">
    <location>
        <begin position="104"/>
        <end position="117"/>
    </location>
</feature>
<feature type="transmembrane region" description="Helical" evidence="1">
    <location>
        <begin position="118"/>
        <end position="138"/>
    </location>
</feature>
<feature type="topological domain" description="Virion surface" evidence="1">
    <location>
        <begin position="139"/>
        <end position="149"/>
    </location>
</feature>
<feature type="transmembrane region" description="Helical" evidence="1">
    <location>
        <begin position="150"/>
        <end position="170"/>
    </location>
</feature>
<feature type="topological domain" description="Intravirion" evidence="1">
    <location>
        <begin position="171"/>
        <end position="207"/>
    </location>
</feature>
<feature type="transmembrane region" description="Helical" evidence="1">
    <location>
        <begin position="208"/>
        <end position="228"/>
    </location>
</feature>
<feature type="topological domain" description="Virion surface" evidence="1">
    <location>
        <begin position="229"/>
        <end position="238"/>
    </location>
</feature>
<feature type="transmembrane region" description="Helical" evidence="1">
    <location>
        <begin position="239"/>
        <end position="259"/>
    </location>
</feature>
<feature type="topological domain" description="Intravirion" evidence="1">
    <location>
        <begin position="260"/>
        <end position="269"/>
    </location>
</feature>
<feature type="transmembrane region" description="Helical" evidence="1">
    <location>
        <begin position="270"/>
        <end position="290"/>
    </location>
</feature>
<feature type="topological domain" description="Virion surface" evidence="1">
    <location>
        <begin position="291"/>
        <end position="301"/>
    </location>
</feature>
<feature type="transmembrane region" description="Helical" evidence="1">
    <location>
        <begin position="302"/>
        <end position="322"/>
    </location>
</feature>
<feature type="topological domain" description="Intravirion" evidence="1">
    <location>
        <begin position="323"/>
        <end position="374"/>
    </location>
</feature>
<feature type="region of interest" description="Disordered" evidence="2">
    <location>
        <begin position="345"/>
        <end position="374"/>
    </location>
</feature>
<feature type="compositionally biased region" description="Acidic residues" evidence="2">
    <location>
        <begin position="364"/>
        <end position="374"/>
    </location>
</feature>
<feature type="disulfide bond" description="Interchain (with gN)" evidence="1">
    <location>
        <position position="44"/>
    </location>
</feature>
<sequence length="374" mass="42950">MKSSKKDIFILHIWLKLMGCYVFMFITSVVLPIAAMFPNLGFPCYYNTLVDYSKLNLREKNQAQHLTPTLFLEAPEMFFYVTYSFIVDCCSLVYYALAAVAVVKAKKHAPGLMALSQWIMAVGSPTLLYMAVLKLWTIQLYIHTLSYKHIYLAAFVYCLHWLLSMVYTECYITNVSSQWTSSELKKTIPENILLYRVVHVLKPIMMNVHLSVVALETLIFCLSFMMAIGNSFYVMVSDIVFGAINLYLILPIIWYFVTEFWLSKYLPRQFGFYFGVLVASIILILPVVRYDKIFVAAQIHRAVSINIAMIPLCALVALLVRACRVYTDRKKIAYTALPSKPQTIKYTKPIEPSTKQAPDSSIFLEEESDTDFEQ</sequence>
<dbReference type="EMBL" id="AF005370">
    <property type="protein sequence ID" value="AAC58085.1"/>
    <property type="molecule type" value="Genomic_DNA"/>
</dbReference>
<dbReference type="PIR" id="T03133">
    <property type="entry name" value="T03133"/>
</dbReference>
<dbReference type="RefSeq" id="NP_065537.1">
    <property type="nucleotide sequence ID" value="NC_002531.1"/>
</dbReference>
<dbReference type="KEGG" id="vg:911758"/>
<dbReference type="Proteomes" id="UP000000941">
    <property type="component" value="Segment"/>
</dbReference>
<dbReference type="GO" id="GO:0044175">
    <property type="term" value="C:host cell endosome membrane"/>
    <property type="evidence" value="ECO:0007669"/>
    <property type="project" value="UniProtKB-SubCell"/>
</dbReference>
<dbReference type="GO" id="GO:0044177">
    <property type="term" value="C:host cell Golgi apparatus"/>
    <property type="evidence" value="ECO:0007669"/>
    <property type="project" value="UniProtKB-SubCell"/>
</dbReference>
<dbReference type="GO" id="GO:0044201">
    <property type="term" value="C:host cell nuclear inner membrane"/>
    <property type="evidence" value="ECO:0007669"/>
    <property type="project" value="UniProtKB-SubCell"/>
</dbReference>
<dbReference type="GO" id="GO:0016020">
    <property type="term" value="C:membrane"/>
    <property type="evidence" value="ECO:0007669"/>
    <property type="project" value="UniProtKB-KW"/>
</dbReference>
<dbReference type="GO" id="GO:0019031">
    <property type="term" value="C:viral envelope"/>
    <property type="evidence" value="ECO:0007669"/>
    <property type="project" value="UniProtKB-KW"/>
</dbReference>
<dbReference type="GO" id="GO:0055036">
    <property type="term" value="C:virion membrane"/>
    <property type="evidence" value="ECO:0007669"/>
    <property type="project" value="UniProtKB-SubCell"/>
</dbReference>
<dbReference type="HAMAP" id="MF_04035">
    <property type="entry name" value="HSV_GM"/>
    <property type="match status" value="1"/>
</dbReference>
<dbReference type="InterPro" id="IPR000785">
    <property type="entry name" value="Herpes_glycop_M"/>
</dbReference>
<dbReference type="Pfam" id="PF01528">
    <property type="entry name" value="Herpes_glycop"/>
    <property type="match status" value="1"/>
</dbReference>
<dbReference type="PRINTS" id="PR00333">
    <property type="entry name" value="HSVINTEGRLMP"/>
</dbReference>